<sequence length="400" mass="44823">MIRRLAALSALSGLATAWLPEVNKKITSTNGTNLFSSSNGKIRGVNLGSQFVFEPWIAEKAWSDMGCGGQKSEFDCVSSLGQAKANGAFASHWGSWITQDDLAEMVSYGLNTIRVPVGYWMREDLVYSDSEHFPQGGLQYLENLCGWASDAGLYIIIDLHGAPGAQTPQNPFTGQYAPTAGFYQDYQFERALKFLEWMTTNIHQNDKFRNVGMLEVVNEPVQDAGKVGSMRSTYYPNAFKRIRAAEQSLNIDRNNYLHIQMMDRLWGSGDPNESLTDTYYAAYDDHRYLKWAGVAVSKDSYISTSCSDQLNSNTPTIVGEWSLSVPDSVQWNSDWAPDSNKDFYKKWFAAQVTAYEKQQGWIFWTWKAQLGDYRWSYQDAVAAGVIPTDLNSLAGLKVCG</sequence>
<reference key="1">
    <citation type="journal article" date="2008" name="PLoS Genet.">
        <title>Genomic islands in the pathogenic filamentous fungus Aspergillus fumigatus.</title>
        <authorList>
            <person name="Fedorova N.D."/>
            <person name="Khaldi N."/>
            <person name="Joardar V.S."/>
            <person name="Maiti R."/>
            <person name="Amedeo P."/>
            <person name="Anderson M.J."/>
            <person name="Crabtree J."/>
            <person name="Silva J.C."/>
            <person name="Badger J.H."/>
            <person name="Albarraq A."/>
            <person name="Angiuoli S."/>
            <person name="Bussey H."/>
            <person name="Bowyer P."/>
            <person name="Cotty P.J."/>
            <person name="Dyer P.S."/>
            <person name="Egan A."/>
            <person name="Galens K."/>
            <person name="Fraser-Liggett C.M."/>
            <person name="Haas B.J."/>
            <person name="Inman J.M."/>
            <person name="Kent R."/>
            <person name="Lemieux S."/>
            <person name="Malavazi I."/>
            <person name="Orvis J."/>
            <person name="Roemer T."/>
            <person name="Ronning C.M."/>
            <person name="Sundaram J.P."/>
            <person name="Sutton G."/>
            <person name="Turner G."/>
            <person name="Venter J.C."/>
            <person name="White O.R."/>
            <person name="Whitty B.R."/>
            <person name="Youngman P."/>
            <person name="Wolfe K.H."/>
            <person name="Goldman G.H."/>
            <person name="Wortman J.R."/>
            <person name="Jiang B."/>
            <person name="Denning D.W."/>
            <person name="Nierman W.C."/>
        </authorList>
    </citation>
    <scope>NUCLEOTIDE SEQUENCE [LARGE SCALE GENOMIC DNA]</scope>
    <source>
        <strain>ATCC 1020 / DSM 3700 / CBS 544.65 / FGSC A1164 / JCM 1740 / NRRL 181 / WB 181</strain>
    </source>
</reference>
<evidence type="ECO:0000250" key="1"/>
<evidence type="ECO:0000255" key="2"/>
<evidence type="ECO:0000305" key="3"/>
<gene>
    <name type="primary">exgB</name>
    <name type="ORF">NFIA_084850</name>
</gene>
<organism>
    <name type="scientific">Neosartorya fischeri (strain ATCC 1020 / DSM 3700 / CBS 544.65 / FGSC A1164 / JCM 1740 / NRRL 181 / WB 181)</name>
    <name type="common">Aspergillus fischerianus</name>
    <dbReference type="NCBI Taxonomy" id="331117"/>
    <lineage>
        <taxon>Eukaryota</taxon>
        <taxon>Fungi</taxon>
        <taxon>Dikarya</taxon>
        <taxon>Ascomycota</taxon>
        <taxon>Pezizomycotina</taxon>
        <taxon>Eurotiomycetes</taxon>
        <taxon>Eurotiomycetidae</taxon>
        <taxon>Eurotiales</taxon>
        <taxon>Aspergillaceae</taxon>
        <taxon>Aspergillus</taxon>
        <taxon>Aspergillus subgen. Fumigati</taxon>
    </lineage>
</organism>
<feature type="signal peptide" evidence="2">
    <location>
        <begin position="1"/>
        <end position="17"/>
    </location>
</feature>
<feature type="chain" id="PRO_0000394711" description="Probable glucan endo-1,6-beta-glucosidase B">
    <location>
        <begin position="18"/>
        <end position="400"/>
    </location>
</feature>
<feature type="active site" description="Proton donor" evidence="1">
    <location>
        <position position="219"/>
    </location>
</feature>
<feature type="active site" description="Nucleophile" evidence="1">
    <location>
        <position position="320"/>
    </location>
</feature>
<feature type="glycosylation site" description="N-linked (GlcNAc...) asparagine" evidence="2">
    <location>
        <position position="30"/>
    </location>
</feature>
<feature type="glycosylation site" description="N-linked (GlcNAc...) asparagine" evidence="2">
    <location>
        <position position="272"/>
    </location>
</feature>
<proteinExistence type="inferred from homology"/>
<name>EXGB_NEOFI</name>
<protein>
    <recommendedName>
        <fullName>Probable glucan endo-1,6-beta-glucosidase B</fullName>
        <ecNumber>3.2.1.75</ecNumber>
    </recommendedName>
    <alternativeName>
        <fullName>Beta-1,6-glucanase B</fullName>
    </alternativeName>
    <alternativeName>
        <fullName>Endo-1,6-beta-D-glucanase B</fullName>
    </alternativeName>
    <alternativeName>
        <fullName>Endo-1,6-beta-glucanase B</fullName>
    </alternativeName>
</protein>
<comment type="function">
    <text evidence="1">Beta-glucanases participate in the metabolism of beta-glucan, the main structural component of the cell wall. Acts on lutean, pustulan and 1,6-oligo-beta-D-glucosides (By similarity).</text>
</comment>
<comment type="catalytic activity">
    <reaction>
        <text>Random hydrolysis of (1-&gt;6)-linkages in (1-&gt;6)-beta-D-glucans.</text>
        <dbReference type="EC" id="3.2.1.75"/>
    </reaction>
</comment>
<comment type="subcellular location">
    <subcellularLocation>
        <location evidence="1">Secreted</location>
    </subcellularLocation>
</comment>
<comment type="similarity">
    <text evidence="3">Belongs to the glycosyl hydrolase 5 (cellulase A) family.</text>
</comment>
<accession>A1DGM6</accession>
<keyword id="KW-0119">Carbohydrate metabolism</keyword>
<keyword id="KW-0961">Cell wall biogenesis/degradation</keyword>
<keyword id="KW-0325">Glycoprotein</keyword>
<keyword id="KW-0326">Glycosidase</keyword>
<keyword id="KW-0378">Hydrolase</keyword>
<keyword id="KW-0624">Polysaccharide degradation</keyword>
<keyword id="KW-1185">Reference proteome</keyword>
<keyword id="KW-0964">Secreted</keyword>
<keyword id="KW-0732">Signal</keyword>
<dbReference type="EC" id="3.2.1.75"/>
<dbReference type="EMBL" id="DS027696">
    <property type="protein sequence ID" value="EAW18533.1"/>
    <property type="molecule type" value="Genomic_DNA"/>
</dbReference>
<dbReference type="RefSeq" id="XP_001260430.1">
    <property type="nucleotide sequence ID" value="XM_001260429.1"/>
</dbReference>
<dbReference type="SMR" id="A1DGM6"/>
<dbReference type="GlyCosmos" id="A1DGM6">
    <property type="glycosylation" value="2 sites, No reported glycans"/>
</dbReference>
<dbReference type="EnsemblFungi" id="EAW18533">
    <property type="protein sequence ID" value="EAW18533"/>
    <property type="gene ID" value="NFIA_084850"/>
</dbReference>
<dbReference type="GeneID" id="4586988"/>
<dbReference type="KEGG" id="nfi:NFIA_084850"/>
<dbReference type="VEuPathDB" id="FungiDB:NFIA_084850"/>
<dbReference type="eggNOG" id="ENOG502RBRB">
    <property type="taxonomic scope" value="Eukaryota"/>
</dbReference>
<dbReference type="HOGENOM" id="CLU_004624_7_0_1"/>
<dbReference type="OMA" id="WMLPAEW"/>
<dbReference type="OrthoDB" id="1887033at2759"/>
<dbReference type="Proteomes" id="UP000006702">
    <property type="component" value="Unassembled WGS sequence"/>
</dbReference>
<dbReference type="GO" id="GO:0009986">
    <property type="term" value="C:cell surface"/>
    <property type="evidence" value="ECO:0007669"/>
    <property type="project" value="TreeGrafter"/>
</dbReference>
<dbReference type="GO" id="GO:0005576">
    <property type="term" value="C:extracellular region"/>
    <property type="evidence" value="ECO:0007669"/>
    <property type="project" value="UniProtKB-SubCell"/>
</dbReference>
<dbReference type="GO" id="GO:0046557">
    <property type="term" value="F:glucan endo-1,6-beta-glucosidase activity"/>
    <property type="evidence" value="ECO:0007669"/>
    <property type="project" value="UniProtKB-EC"/>
</dbReference>
<dbReference type="GO" id="GO:0004338">
    <property type="term" value="F:glucan exo-1,3-beta-glucosidase activity"/>
    <property type="evidence" value="ECO:0007669"/>
    <property type="project" value="TreeGrafter"/>
</dbReference>
<dbReference type="GO" id="GO:0071555">
    <property type="term" value="P:cell wall organization"/>
    <property type="evidence" value="ECO:0007669"/>
    <property type="project" value="UniProtKB-KW"/>
</dbReference>
<dbReference type="GO" id="GO:0009251">
    <property type="term" value="P:glucan catabolic process"/>
    <property type="evidence" value="ECO:0007669"/>
    <property type="project" value="TreeGrafter"/>
</dbReference>
<dbReference type="FunFam" id="3.20.20.80:FF:000269">
    <property type="entry name" value="Probable glucan endo-1,6-beta-glucosidase B"/>
    <property type="match status" value="1"/>
</dbReference>
<dbReference type="Gene3D" id="3.20.20.80">
    <property type="entry name" value="Glycosidases"/>
    <property type="match status" value="1"/>
</dbReference>
<dbReference type="InterPro" id="IPR001547">
    <property type="entry name" value="Glyco_hydro_5"/>
</dbReference>
<dbReference type="InterPro" id="IPR017853">
    <property type="entry name" value="Glycoside_hydrolase_SF"/>
</dbReference>
<dbReference type="InterPro" id="IPR050386">
    <property type="entry name" value="Glycosyl_hydrolase_5"/>
</dbReference>
<dbReference type="PANTHER" id="PTHR31297">
    <property type="entry name" value="GLUCAN ENDO-1,6-BETA-GLUCOSIDASE B"/>
    <property type="match status" value="1"/>
</dbReference>
<dbReference type="PANTHER" id="PTHR31297:SF39">
    <property type="entry name" value="GLUCAN ENDO-1,6-BETA-GLUCOSIDASE B"/>
    <property type="match status" value="1"/>
</dbReference>
<dbReference type="Pfam" id="PF00150">
    <property type="entry name" value="Cellulase"/>
    <property type="match status" value="1"/>
</dbReference>
<dbReference type="SUPFAM" id="SSF51445">
    <property type="entry name" value="(Trans)glycosidases"/>
    <property type="match status" value="1"/>
</dbReference>